<comment type="function">
    <text evidence="1">Specifically catalyzes the beta-elimination of phosphate from L-phosphoserine and the beta-addition of sulfite to the dehydroalanine intermediate to produce L-cysteate.</text>
</comment>
<comment type="catalytic activity">
    <reaction evidence="1">
        <text>O-phospho-L-serine + sulfite + H(+) = L-cysteate + phosphate</text>
        <dbReference type="Rhea" id="RHEA:26486"/>
        <dbReference type="ChEBI" id="CHEBI:15378"/>
        <dbReference type="ChEBI" id="CHEBI:17359"/>
        <dbReference type="ChEBI" id="CHEBI:43474"/>
        <dbReference type="ChEBI" id="CHEBI:57524"/>
        <dbReference type="ChEBI" id="CHEBI:58090"/>
        <dbReference type="EC" id="2.5.1.76"/>
    </reaction>
</comment>
<comment type="cofactor">
    <cofactor evidence="1">
        <name>pyridoxal 5'-phosphate</name>
        <dbReference type="ChEBI" id="CHEBI:597326"/>
    </cofactor>
</comment>
<comment type="pathway">
    <text evidence="1">Cofactor biosynthesis; coenzyme M biosynthesis.</text>
</comment>
<comment type="subunit">
    <text evidence="1">Homotrimer.</text>
</comment>
<comment type="similarity">
    <text evidence="1">Belongs to the threonine synthase family. Cysteate synthase subfamily.</text>
</comment>
<comment type="sequence caution" evidence="2">
    <conflict type="erroneous initiation">
        <sequence resource="EMBL-CDS" id="ABK14470"/>
    </conflict>
</comment>
<dbReference type="EC" id="2.5.1.76" evidence="1"/>
<dbReference type="EMBL" id="CP000477">
    <property type="protein sequence ID" value="ABK14470.1"/>
    <property type="status" value="ALT_INIT"/>
    <property type="molecule type" value="Genomic_DNA"/>
</dbReference>
<dbReference type="RefSeq" id="WP_175265743.1">
    <property type="nucleotide sequence ID" value="NC_008553.1"/>
</dbReference>
<dbReference type="SMR" id="A0B6Z6"/>
<dbReference type="STRING" id="349307.Mthe_0680"/>
<dbReference type="GeneID" id="4463320"/>
<dbReference type="KEGG" id="mtp:Mthe_0680"/>
<dbReference type="HOGENOM" id="CLU_666687_0_0_2"/>
<dbReference type="OrthoDB" id="6371at2157"/>
<dbReference type="UniPathway" id="UPA00355"/>
<dbReference type="Proteomes" id="UP000000674">
    <property type="component" value="Chromosome"/>
</dbReference>
<dbReference type="GO" id="GO:0044686">
    <property type="term" value="F:cysteate synthase activity"/>
    <property type="evidence" value="ECO:0007669"/>
    <property type="project" value="UniProtKB-UniRule"/>
</dbReference>
<dbReference type="GO" id="GO:0030170">
    <property type="term" value="F:pyridoxal phosphate binding"/>
    <property type="evidence" value="ECO:0007669"/>
    <property type="project" value="UniProtKB-UniRule"/>
</dbReference>
<dbReference type="GO" id="GO:0019295">
    <property type="term" value="P:coenzyme M biosynthetic process"/>
    <property type="evidence" value="ECO:0007669"/>
    <property type="project" value="UniProtKB-UniRule"/>
</dbReference>
<dbReference type="Gene3D" id="3.40.50.1100">
    <property type="match status" value="2"/>
</dbReference>
<dbReference type="HAMAP" id="MF_02109">
    <property type="entry name" value="Cya_synthase"/>
    <property type="match status" value="1"/>
</dbReference>
<dbReference type="InterPro" id="IPR022401">
    <property type="entry name" value="Cysteate_synthase"/>
</dbReference>
<dbReference type="InterPro" id="IPR001926">
    <property type="entry name" value="TrpB-like_PALP"/>
</dbReference>
<dbReference type="InterPro" id="IPR036052">
    <property type="entry name" value="TrpB-like_PALP_sf"/>
</dbReference>
<dbReference type="NCBIfam" id="TIGR03844">
    <property type="entry name" value="cysteate_syn"/>
    <property type="match status" value="1"/>
</dbReference>
<dbReference type="Pfam" id="PF00291">
    <property type="entry name" value="PALP"/>
    <property type="match status" value="1"/>
</dbReference>
<dbReference type="SUPFAM" id="SSF53686">
    <property type="entry name" value="Tryptophan synthase beta subunit-like PLP-dependent enzymes"/>
    <property type="match status" value="1"/>
</dbReference>
<proteinExistence type="inferred from homology"/>
<gene>
    <name type="ordered locus">Mthe_0680</name>
</gene>
<reference key="1">
    <citation type="submission" date="2006-10" db="EMBL/GenBank/DDBJ databases">
        <title>Complete sequence of Methanosaeta thermophila PT.</title>
        <authorList>
            <consortium name="US DOE Joint Genome Institute"/>
            <person name="Copeland A."/>
            <person name="Lucas S."/>
            <person name="Lapidus A."/>
            <person name="Barry K."/>
            <person name="Detter J.C."/>
            <person name="Glavina del Rio T."/>
            <person name="Hammon N."/>
            <person name="Israni S."/>
            <person name="Pitluck S."/>
            <person name="Chain P."/>
            <person name="Malfatti S."/>
            <person name="Shin M."/>
            <person name="Vergez L."/>
            <person name="Schmutz J."/>
            <person name="Larimer F."/>
            <person name="Land M."/>
            <person name="Hauser L."/>
            <person name="Kyrpides N."/>
            <person name="Kim E."/>
            <person name="Smith K.S."/>
            <person name="Ingram-Smith C."/>
            <person name="Richardson P."/>
        </authorList>
    </citation>
    <scope>NUCLEOTIDE SEQUENCE [LARGE SCALE GENOMIC DNA]</scope>
    <source>
        <strain>DSM 6194 / JCM 14653 / NBRC 101360 / PT</strain>
    </source>
</reference>
<protein>
    <recommendedName>
        <fullName evidence="1">Cysteate synthase</fullName>
        <shortName evidence="1">CS</shortName>
        <shortName evidence="1">Cya synthase</shortName>
        <ecNumber evidence="1">2.5.1.76</ecNumber>
    </recommendedName>
</protein>
<accession>A0B6Z6</accession>
<sequence>MGEYTLRCAGCGNLLIGGAASCPLDGGLPRADYIERRFNPRKLPGIWSFIDWLPVDGWNRSTGASSVTYRSSGLAAELGLDSLYISFSGYWPERGALMRTCSFKELEAAPTMQMLRDRKAGETLVVASAGNTARAFAEVCSITDQPLILFVPVSSLDRIWTTVEPGRVLVVGVKGDYADAIKLADVLSSRSGFRAEGGARNIARRDGMGTVLLDHVRRFNSLPNHYFQAIGSGTGGIAVWEASMRIIEDGRFGERLPRLHLAQNTPCAPVYNMWHGMGSEESDFDAYGCPEGMHDDVLFNRNPPYAVPGGVRDAVISSGERIYGIDNSRAVSAQKLFEMSEGIDILPAASVAVAALVDAVESGFVENDDDILLNITGGGVKRLAEDHSRVKLKCDLTVGLRDSEDALSSIEEIFA</sequence>
<organism>
    <name type="scientific">Methanothrix thermoacetophila (strain DSM 6194 / JCM 14653 / NBRC 101360 / PT)</name>
    <name type="common">Methanosaeta thermophila</name>
    <dbReference type="NCBI Taxonomy" id="349307"/>
    <lineage>
        <taxon>Archaea</taxon>
        <taxon>Methanobacteriati</taxon>
        <taxon>Methanobacteriota</taxon>
        <taxon>Stenosarchaea group</taxon>
        <taxon>Methanomicrobia</taxon>
        <taxon>Methanotrichales</taxon>
        <taxon>Methanotrichaceae</taxon>
        <taxon>Methanothrix</taxon>
    </lineage>
</organism>
<keyword id="KW-0174">Coenzyme M biosynthesis</keyword>
<keyword id="KW-0663">Pyridoxal phosphate</keyword>
<keyword id="KW-1185">Reference proteome</keyword>
<keyword id="KW-0808">Transferase</keyword>
<evidence type="ECO:0000255" key="1">
    <source>
        <dbReference type="HAMAP-Rule" id="MF_02109"/>
    </source>
</evidence>
<evidence type="ECO:0000305" key="2"/>
<feature type="chain" id="PRO_0000392649" description="Cysteate synthase">
    <location>
        <begin position="1"/>
        <end position="415"/>
    </location>
</feature>
<feature type="binding site" evidence="1">
    <location>
        <position position="131"/>
    </location>
    <ligand>
        <name>pyridoxal 5'-phosphate</name>
        <dbReference type="ChEBI" id="CHEBI:597326"/>
    </ligand>
</feature>
<feature type="binding site" evidence="1">
    <location>
        <position position="376"/>
    </location>
    <ligand>
        <name>pyridoxal 5'-phosphate</name>
        <dbReference type="ChEBI" id="CHEBI:597326"/>
    </ligand>
</feature>
<feature type="modified residue" description="N6-(pyridoxal phosphate)lysine" evidence="1">
    <location>
        <position position="104"/>
    </location>
</feature>
<name>CYAS_METTP</name>